<dbReference type="EC" id="2.5.1.141" evidence="1"/>
<dbReference type="EMBL" id="BX640436">
    <property type="protein sequence ID" value="CAE39513.1"/>
    <property type="molecule type" value="Genomic_DNA"/>
</dbReference>
<dbReference type="SMR" id="Q7W316"/>
<dbReference type="KEGG" id="bpa:BPP4234"/>
<dbReference type="HOGENOM" id="CLU_029631_0_2_4"/>
<dbReference type="UniPathway" id="UPA00834">
    <property type="reaction ID" value="UER00712"/>
</dbReference>
<dbReference type="Proteomes" id="UP000001421">
    <property type="component" value="Chromosome"/>
</dbReference>
<dbReference type="GO" id="GO:0005886">
    <property type="term" value="C:plasma membrane"/>
    <property type="evidence" value="ECO:0007669"/>
    <property type="project" value="UniProtKB-SubCell"/>
</dbReference>
<dbReference type="GO" id="GO:0008495">
    <property type="term" value="F:protoheme IX farnesyltransferase activity"/>
    <property type="evidence" value="ECO:0007669"/>
    <property type="project" value="UniProtKB-UniRule"/>
</dbReference>
<dbReference type="GO" id="GO:0048034">
    <property type="term" value="P:heme O biosynthetic process"/>
    <property type="evidence" value="ECO:0007669"/>
    <property type="project" value="UniProtKB-UniRule"/>
</dbReference>
<dbReference type="CDD" id="cd13957">
    <property type="entry name" value="PT_UbiA_Cox10"/>
    <property type="match status" value="1"/>
</dbReference>
<dbReference type="Gene3D" id="1.10.357.140">
    <property type="entry name" value="UbiA prenyltransferase"/>
    <property type="match status" value="1"/>
</dbReference>
<dbReference type="HAMAP" id="MF_00154">
    <property type="entry name" value="CyoE_CtaB"/>
    <property type="match status" value="1"/>
</dbReference>
<dbReference type="InterPro" id="IPR006369">
    <property type="entry name" value="Protohaem_IX_farnesylTrfase"/>
</dbReference>
<dbReference type="InterPro" id="IPR000537">
    <property type="entry name" value="UbiA_prenyltransferase"/>
</dbReference>
<dbReference type="InterPro" id="IPR044878">
    <property type="entry name" value="UbiA_sf"/>
</dbReference>
<dbReference type="NCBIfam" id="TIGR01473">
    <property type="entry name" value="cyoE_ctaB"/>
    <property type="match status" value="1"/>
</dbReference>
<dbReference type="NCBIfam" id="NF003349">
    <property type="entry name" value="PRK04375.1-2"/>
    <property type="match status" value="1"/>
</dbReference>
<dbReference type="PANTHER" id="PTHR43448:SF7">
    <property type="entry name" value="4-HYDROXYBENZOATE SOLANESYLTRANSFERASE"/>
    <property type="match status" value="1"/>
</dbReference>
<dbReference type="PANTHER" id="PTHR43448">
    <property type="entry name" value="PROTOHEME IX FARNESYLTRANSFERASE, MITOCHONDRIAL"/>
    <property type="match status" value="1"/>
</dbReference>
<dbReference type="Pfam" id="PF01040">
    <property type="entry name" value="UbiA"/>
    <property type="match status" value="1"/>
</dbReference>
<sequence length="297" mass="32710">MSSLAAPQTGLLRQYLVLTKPRVTQLAVFCAVIGMFLAAPGMPDLSHVVFGTLGIWLLAAAAFAINCLIEQEVDARMLRTARRATARGTISDIQVLSLSGLLGGAGMLVLYHLVNPLTMWLTFATFVGYAIIYTVILKPRTPQNIVIGGLSGAMPPALGWAAVADSVPAEAWVLVLIIFIWTPPHFWALALYRNNDYIKAGLPMLPVTHGQQFTRLHILLYSFALLATTLLPYAIRMSGALYLASALALGGMFVWYAWRLYREYSDALARRLFRFSILYLALLFGALLIDHWVGLLR</sequence>
<proteinExistence type="inferred from homology"/>
<evidence type="ECO:0000255" key="1">
    <source>
        <dbReference type="HAMAP-Rule" id="MF_00154"/>
    </source>
</evidence>
<organism>
    <name type="scientific">Bordetella parapertussis (strain 12822 / ATCC BAA-587 / NCTC 13253)</name>
    <dbReference type="NCBI Taxonomy" id="257311"/>
    <lineage>
        <taxon>Bacteria</taxon>
        <taxon>Pseudomonadati</taxon>
        <taxon>Pseudomonadota</taxon>
        <taxon>Betaproteobacteria</taxon>
        <taxon>Burkholderiales</taxon>
        <taxon>Alcaligenaceae</taxon>
        <taxon>Bordetella</taxon>
    </lineage>
</organism>
<keyword id="KW-0997">Cell inner membrane</keyword>
<keyword id="KW-1003">Cell membrane</keyword>
<keyword id="KW-0350">Heme biosynthesis</keyword>
<keyword id="KW-0472">Membrane</keyword>
<keyword id="KW-0808">Transferase</keyword>
<keyword id="KW-0812">Transmembrane</keyword>
<keyword id="KW-1133">Transmembrane helix</keyword>
<accession>Q7W316</accession>
<comment type="function">
    <text evidence="1">Converts heme B (protoheme IX) to heme O by substitution of the vinyl group on carbon 2 of heme B porphyrin ring with a hydroxyethyl farnesyl side group.</text>
</comment>
<comment type="catalytic activity">
    <reaction evidence="1">
        <text>heme b + (2E,6E)-farnesyl diphosphate + H2O = Fe(II)-heme o + diphosphate</text>
        <dbReference type="Rhea" id="RHEA:28070"/>
        <dbReference type="ChEBI" id="CHEBI:15377"/>
        <dbReference type="ChEBI" id="CHEBI:33019"/>
        <dbReference type="ChEBI" id="CHEBI:60344"/>
        <dbReference type="ChEBI" id="CHEBI:60530"/>
        <dbReference type="ChEBI" id="CHEBI:175763"/>
        <dbReference type="EC" id="2.5.1.141"/>
    </reaction>
</comment>
<comment type="pathway">
    <text evidence="1">Porphyrin-containing compound metabolism; heme O biosynthesis; heme O from protoheme: step 1/1.</text>
</comment>
<comment type="subcellular location">
    <subcellularLocation>
        <location evidence="1">Cell inner membrane</location>
        <topology evidence="1">Multi-pass membrane protein</topology>
    </subcellularLocation>
</comment>
<comment type="miscellaneous">
    <text evidence="1">Carbon 2 of the heme B porphyrin ring is defined according to the Fischer nomenclature.</text>
</comment>
<comment type="similarity">
    <text evidence="1">Belongs to the UbiA prenyltransferase family. Protoheme IX farnesyltransferase subfamily.</text>
</comment>
<feature type="chain" id="PRO_0000327015" description="Protoheme IX farnesyltransferase">
    <location>
        <begin position="1"/>
        <end position="297"/>
    </location>
</feature>
<feature type="transmembrane region" description="Helical" evidence="1">
    <location>
        <begin position="23"/>
        <end position="43"/>
    </location>
</feature>
<feature type="transmembrane region" description="Helical" evidence="1">
    <location>
        <begin position="49"/>
        <end position="69"/>
    </location>
</feature>
<feature type="transmembrane region" description="Helical" evidence="1">
    <location>
        <begin position="93"/>
        <end position="113"/>
    </location>
</feature>
<feature type="transmembrane region" description="Helical" evidence="1">
    <location>
        <begin position="117"/>
        <end position="137"/>
    </location>
</feature>
<feature type="transmembrane region" description="Helical" evidence="1">
    <location>
        <begin position="144"/>
        <end position="164"/>
    </location>
</feature>
<feature type="transmembrane region" description="Helical" evidence="1">
    <location>
        <begin position="171"/>
        <end position="191"/>
    </location>
</feature>
<feature type="transmembrane region" description="Helical" evidence="1">
    <location>
        <begin position="215"/>
        <end position="235"/>
    </location>
</feature>
<feature type="transmembrane region" description="Helical" evidence="1">
    <location>
        <begin position="238"/>
        <end position="258"/>
    </location>
</feature>
<feature type="transmembrane region" description="Helical" evidence="1">
    <location>
        <begin position="275"/>
        <end position="295"/>
    </location>
</feature>
<gene>
    <name evidence="1" type="primary">ctaB</name>
    <name type="ordered locus">BPP4234</name>
</gene>
<name>COXX_BORPA</name>
<reference key="1">
    <citation type="journal article" date="2003" name="Nat. Genet.">
        <title>Comparative analysis of the genome sequences of Bordetella pertussis, Bordetella parapertussis and Bordetella bronchiseptica.</title>
        <authorList>
            <person name="Parkhill J."/>
            <person name="Sebaihia M."/>
            <person name="Preston A."/>
            <person name="Murphy L.D."/>
            <person name="Thomson N.R."/>
            <person name="Harris D.E."/>
            <person name="Holden M.T.G."/>
            <person name="Churcher C.M."/>
            <person name="Bentley S.D."/>
            <person name="Mungall K.L."/>
            <person name="Cerdeno-Tarraga A.-M."/>
            <person name="Temple L."/>
            <person name="James K.D."/>
            <person name="Harris B."/>
            <person name="Quail M.A."/>
            <person name="Achtman M."/>
            <person name="Atkin R."/>
            <person name="Baker S."/>
            <person name="Basham D."/>
            <person name="Bason N."/>
            <person name="Cherevach I."/>
            <person name="Chillingworth T."/>
            <person name="Collins M."/>
            <person name="Cronin A."/>
            <person name="Davis P."/>
            <person name="Doggett J."/>
            <person name="Feltwell T."/>
            <person name="Goble A."/>
            <person name="Hamlin N."/>
            <person name="Hauser H."/>
            <person name="Holroyd S."/>
            <person name="Jagels K."/>
            <person name="Leather S."/>
            <person name="Moule S."/>
            <person name="Norberczak H."/>
            <person name="O'Neil S."/>
            <person name="Ormond D."/>
            <person name="Price C."/>
            <person name="Rabbinowitsch E."/>
            <person name="Rutter S."/>
            <person name="Sanders M."/>
            <person name="Saunders D."/>
            <person name="Seeger K."/>
            <person name="Sharp S."/>
            <person name="Simmonds M."/>
            <person name="Skelton J."/>
            <person name="Squares R."/>
            <person name="Squares S."/>
            <person name="Stevens K."/>
            <person name="Unwin L."/>
            <person name="Whitehead S."/>
            <person name="Barrell B.G."/>
            <person name="Maskell D.J."/>
        </authorList>
    </citation>
    <scope>NUCLEOTIDE SEQUENCE [LARGE SCALE GENOMIC DNA]</scope>
    <source>
        <strain>12822 / ATCC BAA-587 / NCTC 13253</strain>
    </source>
</reference>
<protein>
    <recommendedName>
        <fullName evidence="1">Protoheme IX farnesyltransferase</fullName>
        <ecNumber evidence="1">2.5.1.141</ecNumber>
    </recommendedName>
    <alternativeName>
        <fullName evidence="1">Heme B farnesyltransferase</fullName>
    </alternativeName>
    <alternativeName>
        <fullName evidence="1">Heme O synthase</fullName>
    </alternativeName>
</protein>